<reference key="1">
    <citation type="journal article" date="1995" name="Mol. Pharmacol.">
        <title>Cloning and expression of a human metabotropic glutamate receptor 1 alpha: enhanced coupling on co-transfection with a glutamate transporter.</title>
        <authorList>
            <person name="Desai M.A."/>
            <person name="Burnett J.P."/>
            <person name="Mayne N.G."/>
            <person name="Schoepp D.D."/>
        </authorList>
    </citation>
    <scope>NUCLEOTIDE SEQUENCE [MRNA] (ISOFORMS ALPHA AND BETA)</scope>
    <scope>FUNCTION</scope>
    <scope>VARIANTS PRO-593 AND PRO-993</scope>
</reference>
<reference key="2">
    <citation type="journal article" date="1996" name="Neuropharmacology">
        <title>Human metabotropic glutamate receptor 1: mRNA distribution, chromosome localization and functional expression of two splice variants.</title>
        <authorList>
            <person name="Stephan D."/>
            <person name="Bon C."/>
            <person name="Holzwarth J.A."/>
            <person name="Galvan M."/>
            <person name="Pruss R.M."/>
        </authorList>
    </citation>
    <scope>NUCLEOTIDE SEQUENCE [MRNA] (ISOFORMS ALPHA AND BETA)</scope>
    <scope>TISSUE SPECIFICITY</scope>
    <scope>VARIANT PRO-993</scope>
</reference>
<reference key="3">
    <citation type="journal article" date="2003" name="Nature">
        <title>The DNA sequence and analysis of human chromosome 6.</title>
        <authorList>
            <person name="Mungall A.J."/>
            <person name="Palmer S.A."/>
            <person name="Sims S.K."/>
            <person name="Edwards C.A."/>
            <person name="Ashurst J.L."/>
            <person name="Wilming L."/>
            <person name="Jones M.C."/>
            <person name="Horton R."/>
            <person name="Hunt S.E."/>
            <person name="Scott C.E."/>
            <person name="Gilbert J.G.R."/>
            <person name="Clamp M.E."/>
            <person name="Bethel G."/>
            <person name="Milne S."/>
            <person name="Ainscough R."/>
            <person name="Almeida J.P."/>
            <person name="Ambrose K.D."/>
            <person name="Andrews T.D."/>
            <person name="Ashwell R.I.S."/>
            <person name="Babbage A.K."/>
            <person name="Bagguley C.L."/>
            <person name="Bailey J."/>
            <person name="Banerjee R."/>
            <person name="Barker D.J."/>
            <person name="Barlow K.F."/>
            <person name="Bates K."/>
            <person name="Beare D.M."/>
            <person name="Beasley H."/>
            <person name="Beasley O."/>
            <person name="Bird C.P."/>
            <person name="Blakey S.E."/>
            <person name="Bray-Allen S."/>
            <person name="Brook J."/>
            <person name="Brown A.J."/>
            <person name="Brown J.Y."/>
            <person name="Burford D.C."/>
            <person name="Burrill W."/>
            <person name="Burton J."/>
            <person name="Carder C."/>
            <person name="Carter N.P."/>
            <person name="Chapman J.C."/>
            <person name="Clark S.Y."/>
            <person name="Clark G."/>
            <person name="Clee C.M."/>
            <person name="Clegg S."/>
            <person name="Cobley V."/>
            <person name="Collier R.E."/>
            <person name="Collins J.E."/>
            <person name="Colman L.K."/>
            <person name="Corby N.R."/>
            <person name="Coville G.J."/>
            <person name="Culley K.M."/>
            <person name="Dhami P."/>
            <person name="Davies J."/>
            <person name="Dunn M."/>
            <person name="Earthrowl M.E."/>
            <person name="Ellington A.E."/>
            <person name="Evans K.A."/>
            <person name="Faulkner L."/>
            <person name="Francis M.D."/>
            <person name="Frankish A."/>
            <person name="Frankland J."/>
            <person name="French L."/>
            <person name="Garner P."/>
            <person name="Garnett J."/>
            <person name="Ghori M.J."/>
            <person name="Gilby L.M."/>
            <person name="Gillson C.J."/>
            <person name="Glithero R.J."/>
            <person name="Grafham D.V."/>
            <person name="Grant M."/>
            <person name="Gribble S."/>
            <person name="Griffiths C."/>
            <person name="Griffiths M.N.D."/>
            <person name="Hall R."/>
            <person name="Halls K.S."/>
            <person name="Hammond S."/>
            <person name="Harley J.L."/>
            <person name="Hart E.A."/>
            <person name="Heath P.D."/>
            <person name="Heathcott R."/>
            <person name="Holmes S.J."/>
            <person name="Howden P.J."/>
            <person name="Howe K.L."/>
            <person name="Howell G.R."/>
            <person name="Huckle E."/>
            <person name="Humphray S.J."/>
            <person name="Humphries M.D."/>
            <person name="Hunt A.R."/>
            <person name="Johnson C.M."/>
            <person name="Joy A.A."/>
            <person name="Kay M."/>
            <person name="Keenan S.J."/>
            <person name="Kimberley A.M."/>
            <person name="King A."/>
            <person name="Laird G.K."/>
            <person name="Langford C."/>
            <person name="Lawlor S."/>
            <person name="Leongamornlert D.A."/>
            <person name="Leversha M."/>
            <person name="Lloyd C.R."/>
            <person name="Lloyd D.M."/>
            <person name="Loveland J.E."/>
            <person name="Lovell J."/>
            <person name="Martin S."/>
            <person name="Mashreghi-Mohammadi M."/>
            <person name="Maslen G.L."/>
            <person name="Matthews L."/>
            <person name="McCann O.T."/>
            <person name="McLaren S.J."/>
            <person name="McLay K."/>
            <person name="McMurray A."/>
            <person name="Moore M.J.F."/>
            <person name="Mullikin J.C."/>
            <person name="Niblett D."/>
            <person name="Nickerson T."/>
            <person name="Novik K.L."/>
            <person name="Oliver K."/>
            <person name="Overton-Larty E.K."/>
            <person name="Parker A."/>
            <person name="Patel R."/>
            <person name="Pearce A.V."/>
            <person name="Peck A.I."/>
            <person name="Phillimore B.J.C.T."/>
            <person name="Phillips S."/>
            <person name="Plumb R.W."/>
            <person name="Porter K.M."/>
            <person name="Ramsey Y."/>
            <person name="Ranby S.A."/>
            <person name="Rice C.M."/>
            <person name="Ross M.T."/>
            <person name="Searle S.M."/>
            <person name="Sehra H.K."/>
            <person name="Sheridan E."/>
            <person name="Skuce C.D."/>
            <person name="Smith S."/>
            <person name="Smith M."/>
            <person name="Spraggon L."/>
            <person name="Squares S.L."/>
            <person name="Steward C.A."/>
            <person name="Sycamore N."/>
            <person name="Tamlyn-Hall G."/>
            <person name="Tester J."/>
            <person name="Theaker A.J."/>
            <person name="Thomas D.W."/>
            <person name="Thorpe A."/>
            <person name="Tracey A."/>
            <person name="Tromans A."/>
            <person name="Tubby B."/>
            <person name="Wall M."/>
            <person name="Wallis J.M."/>
            <person name="West A.P."/>
            <person name="White S.S."/>
            <person name="Whitehead S.L."/>
            <person name="Whittaker H."/>
            <person name="Wild A."/>
            <person name="Willey D.J."/>
            <person name="Wilmer T.E."/>
            <person name="Wood J.M."/>
            <person name="Wray P.W."/>
            <person name="Wyatt J.C."/>
            <person name="Young L."/>
            <person name="Younger R.M."/>
            <person name="Bentley D.R."/>
            <person name="Coulson A."/>
            <person name="Durbin R.M."/>
            <person name="Hubbard T."/>
            <person name="Sulston J.E."/>
            <person name="Dunham I."/>
            <person name="Rogers J."/>
            <person name="Beck S."/>
        </authorList>
    </citation>
    <scope>NUCLEOTIDE SEQUENCE [LARGE SCALE GENOMIC DNA]</scope>
</reference>
<reference key="4">
    <citation type="journal article" date="2004" name="Genome Res.">
        <title>The status, quality, and expansion of the NIH full-length cDNA project: the Mammalian Gene Collection (MGC).</title>
        <authorList>
            <consortium name="The MGC Project Team"/>
        </authorList>
    </citation>
    <scope>NUCLEOTIDE SEQUENCE [LARGE SCALE MRNA] (ISOFORMS ALPHA AND 3)</scope>
    <source>
        <tissue>Testis</tissue>
    </source>
</reference>
<reference key="5">
    <citation type="journal article" date="2012" name="Am. J. Hum. Genet.">
        <title>Autosomal-recessive congenital cerebellar ataxia is caused by mutations in metabotropic glutamate receptor 1.</title>
        <authorList>
            <person name="Guergueltcheva V."/>
            <person name="Azmanov D.N."/>
            <person name="Angelicheva D."/>
            <person name="Smith K.R."/>
            <person name="Chamova T."/>
            <person name="Florez L."/>
            <person name="Bynevelt M."/>
            <person name="Nguyen T."/>
            <person name="Cherninkova S."/>
            <person name="Bojinova V."/>
            <person name="Kaprelyan A."/>
            <person name="Angelova L."/>
            <person name="Morar B."/>
            <person name="Chandler D."/>
            <person name="Kaneva R."/>
            <person name="Bahlo M."/>
            <person name="Tournev I."/>
            <person name="Kalaydjieva L."/>
        </authorList>
    </citation>
    <scope>INVOLVEMENT IN SCAR13</scope>
</reference>
<reference key="6">
    <citation type="journal article" date="2014" name="EMBO Rep.">
        <title>Type 1 metabotropic glutamate receptors (mGlu1) trigger the gating of GluD2 delta glutamate receptors.</title>
        <authorList>
            <person name="Ady V."/>
            <person name="Perroy J."/>
            <person name="Tricoire L."/>
            <person name="Piochon C."/>
            <person name="Dadak S."/>
            <person name="Chen X."/>
            <person name="Dusart I."/>
            <person name="Fagni L."/>
            <person name="Lambolez B."/>
            <person name="Levenes C."/>
        </authorList>
    </citation>
    <scope>FUNCTION</scope>
</reference>
<reference key="7">
    <citation type="journal article" date="2017" name="Am. J. Hum. Genet.">
        <title>Dominant Mutations in GRM1 Cause Spinocerebellar Ataxia Type 44.</title>
        <authorList>
            <person name="Watson L.M."/>
            <person name="Bamber E."/>
            <person name="Schnekenberg R.P."/>
            <person name="Williams J."/>
            <person name="Bettencourt C."/>
            <person name="Lickiss J."/>
            <person name="Jayawant S."/>
            <person name="Fawcett K."/>
            <person name="Clokie S."/>
            <person name="Wallis Y."/>
            <person name="Clouston P."/>
            <person name="Sims D."/>
            <person name="Houlden H."/>
            <person name="Becker E.B.E."/>
            <person name="Nemeth A.H."/>
        </authorList>
    </citation>
    <scope>FUNCTION</scope>
    <scope>INVOLVEMENT IN SCA44</scope>
    <scope>VARIANTS SCA44 CYS-262 AND CYS-792</scope>
    <scope>CHARACTERIZATION OF VARIANTS SCA44 CYS-262 AND CYS-792</scope>
</reference>
<reference key="8">
    <citation type="journal article" date="2017" name="Neuropharmacology">
        <title>mGlu1 receptor canonical signaling pathway contributes to the opening of the orphan GluD2 receptor.</title>
        <authorList>
            <person name="Dadak S."/>
            <person name="Bouquier N."/>
            <person name="Goyet E."/>
            <person name="Fagni L."/>
            <person name="Levenes C."/>
            <person name="Perroy J."/>
        </authorList>
    </citation>
    <scope>FUNCTION</scope>
    <scope>SUBCELLULAR LOCATION</scope>
</reference>
<reference key="9">
    <citation type="submission" date="2011-07" db="PDB data bank">
        <title>Metabotropic glutamate receptor mGluR1 complexed with LY341495 antagonist.</title>
        <authorList>
            <consortium name="Structural genomics consortium (SGC)"/>
        </authorList>
    </citation>
    <scope>X-RAY CRYSTALLOGRAPHY (1.90 ANGSTROMS) OF 28-518 IN COMPLEX WITH ANTAGONIST LY341495</scope>
    <scope>GLYCOSYLATION AT ASN-223</scope>
    <scope>DISULFIDE BONDS</scope>
</reference>
<reference key="10">
    <citation type="journal article" date="2014" name="Science">
        <title>Structure of a class C GPCR metabotropic glutamate receptor 1 bound to an allosteric modulator.</title>
        <authorList>
            <person name="Wu H."/>
            <person name="Wang C."/>
            <person name="Gregory K.J."/>
            <person name="Han G.W."/>
            <person name="Cho H.P."/>
            <person name="Xia Y."/>
            <person name="Niswender C.M."/>
            <person name="Katritch V."/>
            <person name="Meiler J."/>
            <person name="Cherezov V."/>
            <person name="Conn P.J."/>
            <person name="Stevens R.C."/>
        </authorList>
    </citation>
    <scope>X-RAY CRYSTALLOGRAPHY (2.8 ANGSTROMS) OF 581-860 IN COMPLEX WITH ALLOSTERIC ANTAGONIST</scope>
    <scope>FUNCTION</scope>
    <scope>SUBCELLULAR LOCATION</scope>
    <scope>TOPOLOGY</scope>
    <scope>SUBUNIT</scope>
    <scope>DISULFIDE BOND</scope>
    <scope>ACTIVITY REGULATION</scope>
</reference>
<reference key="11">
    <citation type="journal article" date="2006" name="Science">
        <title>The consensus coding sequences of human breast and colorectal cancers.</title>
        <authorList>
            <person name="Sjoeblom T."/>
            <person name="Jones S."/>
            <person name="Wood L.D."/>
            <person name="Parsons D.W."/>
            <person name="Lin J."/>
            <person name="Barber T.D."/>
            <person name="Mandelker D."/>
            <person name="Leary R.J."/>
            <person name="Ptak J."/>
            <person name="Silliman N."/>
            <person name="Szabo S."/>
            <person name="Buckhaults P."/>
            <person name="Farrell C."/>
            <person name="Meeh P."/>
            <person name="Markowitz S.D."/>
            <person name="Willis J."/>
            <person name="Dawson D."/>
            <person name="Willson J.K.V."/>
            <person name="Gazdar A.F."/>
            <person name="Hartigan J."/>
            <person name="Wu L."/>
            <person name="Liu C."/>
            <person name="Parmigiani G."/>
            <person name="Park B.H."/>
            <person name="Bachman K.E."/>
            <person name="Papadopoulos N."/>
            <person name="Vogelstein B."/>
            <person name="Kinzler K.W."/>
            <person name="Velculescu V.E."/>
        </authorList>
    </citation>
    <scope>VARIANT [LARGE SCALE ANALYSIS] TRP-696</scope>
</reference>
<reference key="12">
    <citation type="journal article" date="2015" name="PLoS ONE">
        <title>The role of a novel TRMT1 gene mutation and rare grm1 gene defect in intellectual disability in two azeri families.</title>
        <authorList>
            <person name="Davarniya B."/>
            <person name="Hu H."/>
            <person name="Kahrizi K."/>
            <person name="Musante L."/>
            <person name="Fattahi Z."/>
            <person name="Hosseini M."/>
            <person name="Maqsoud F."/>
            <person name="Farajollahi R."/>
            <person name="Wienker T.F."/>
            <person name="Ropers H.H."/>
            <person name="Najmabadi H."/>
        </authorList>
    </citation>
    <scope>VARIANT SCAR13 PHE-454</scope>
</reference>
<organism>
    <name type="scientific">Homo sapiens</name>
    <name type="common">Human</name>
    <dbReference type="NCBI Taxonomy" id="9606"/>
    <lineage>
        <taxon>Eukaryota</taxon>
        <taxon>Metazoa</taxon>
        <taxon>Chordata</taxon>
        <taxon>Craniata</taxon>
        <taxon>Vertebrata</taxon>
        <taxon>Euteleostomi</taxon>
        <taxon>Mammalia</taxon>
        <taxon>Eutheria</taxon>
        <taxon>Euarchontoglires</taxon>
        <taxon>Primates</taxon>
        <taxon>Haplorrhini</taxon>
        <taxon>Catarrhini</taxon>
        <taxon>Hominidae</taxon>
        <taxon>Homo</taxon>
    </lineage>
</organism>
<evidence type="ECO:0000250" key="1"/>
<evidence type="ECO:0000250" key="2">
    <source>
        <dbReference type="UniProtKB" id="P23385"/>
    </source>
</evidence>
<evidence type="ECO:0000250" key="3">
    <source>
        <dbReference type="UniProtKB" id="P97772"/>
    </source>
</evidence>
<evidence type="ECO:0000255" key="4"/>
<evidence type="ECO:0000256" key="5">
    <source>
        <dbReference type="SAM" id="MobiDB-lite"/>
    </source>
</evidence>
<evidence type="ECO:0000269" key="6">
    <source>
    </source>
</evidence>
<evidence type="ECO:0000269" key="7">
    <source>
    </source>
</evidence>
<evidence type="ECO:0000269" key="8">
    <source>
    </source>
</evidence>
<evidence type="ECO:0000269" key="9">
    <source>
    </source>
</evidence>
<evidence type="ECO:0000269" key="10">
    <source>
    </source>
</evidence>
<evidence type="ECO:0000269" key="11">
    <source>
    </source>
</evidence>
<evidence type="ECO:0000269" key="12">
    <source>
    </source>
</evidence>
<evidence type="ECO:0000269" key="13">
    <source>
    </source>
</evidence>
<evidence type="ECO:0000269" key="14">
    <source>
    </source>
</evidence>
<evidence type="ECO:0000269" key="15">
    <source ref="9"/>
</evidence>
<evidence type="ECO:0000303" key="16">
    <source>
    </source>
</evidence>
<evidence type="ECO:0000303" key="17">
    <source>
    </source>
</evidence>
<evidence type="ECO:0000303" key="18">
    <source>
    </source>
</evidence>
<evidence type="ECO:0000305" key="19"/>
<evidence type="ECO:0007829" key="20">
    <source>
        <dbReference type="PDB" id="3KS9"/>
    </source>
</evidence>
<evidence type="ECO:0007829" key="21">
    <source>
        <dbReference type="PDB" id="4OR2"/>
    </source>
</evidence>
<keyword id="KW-0002">3D-structure</keyword>
<keyword id="KW-0025">Alternative splicing</keyword>
<keyword id="KW-1003">Cell membrane</keyword>
<keyword id="KW-0966">Cell projection</keyword>
<keyword id="KW-0225">Disease variant</keyword>
<keyword id="KW-1015">Disulfide bond</keyword>
<keyword id="KW-0297">G-protein coupled receptor</keyword>
<keyword id="KW-0325">Glycoprotein</keyword>
<keyword id="KW-0472">Membrane</keyword>
<keyword id="KW-0523">Neurodegeneration</keyword>
<keyword id="KW-0597">Phosphoprotein</keyword>
<keyword id="KW-0628">Postsynaptic cell membrane</keyword>
<keyword id="KW-1267">Proteomics identification</keyword>
<keyword id="KW-0675">Receptor</keyword>
<keyword id="KW-1185">Reference proteome</keyword>
<keyword id="KW-0732">Signal</keyword>
<keyword id="KW-0950">Spinocerebellar ataxia</keyword>
<keyword id="KW-0770">Synapse</keyword>
<keyword id="KW-0807">Transducer</keyword>
<keyword id="KW-0812">Transmembrane</keyword>
<keyword id="KW-1133">Transmembrane helix</keyword>
<name>GRM1_HUMAN</name>
<protein>
    <recommendedName>
        <fullName>Metabotropic glutamate receptor 1</fullName>
        <shortName>mGluR1</shortName>
    </recommendedName>
</protein>
<proteinExistence type="evidence at protein level"/>
<sequence>MVGLLLFFFPAIFLEVSLLPRSPGRKVLLAGASSQRSVARMDGDVIIGALFSVHHQPPAEKVPERKCGEIREQYGIQRVEAMFHTLDKINADPVLLPNITLGSEIRDSCWHSSVALEQSIEFIRDSLISIRDEKDGINRCLPDGQSLPPGRTKKPIAGVIGPGSSSVAIQVQNLLQLFDIPQIAYSATSIDLSDKTLYKYFLRVVPSDTLQARAMLDIVKRYNWTYVSAVHTEGNYGESGMDAFKELAAQEGLCIAHSDKIYSNAGEKSFDRLLRKLRERLPKARVVVCFCEGMTVRGLLSAMRRLGVVGEFSLIGSDGWADRDEVIEGYEVEANGGITIKLQSPEVRSFDDYFLKLRLDTNTRNPWFPEFWQHRFQCRLPGHLLENPNFKRICTGNESLEENYVQDSKMGFVINAIYAMAHGLQNMHHALCPGHVGLCDAMKPIDGSKLLDFLIKSSFIGVSGEEVWFDEKGDAPGRYDIMNLQYTEANRYDYVHVGTWHEGVLNIDDYKIQMNKSGVVRSVCSEPCLKGQIKVIRKGEVSCCWICTACKENEYVQDEFTCKACDLGWWPNADLTGCEPIPVRYLEWSNIESIIAIAFSCLGILVTLFVTLIFVLYRDTPVVKSSSRELCYIILAGIFLGYVCPFTLIAKPTTTSCYLQRLLVGLSSAMCYSALVTKTNRIARILAGSKKKICTRKPRFMSAWAQVIIASILISVQLTLVVTLIIMEPPMPILSYPSIKEVYLICNTSNLGVVAPLGYNGLLIMSCTYYAFKTRNVPANFNEAKYIAFTMYTTCIIWLAFVPIYFGSNYKIITTCFAVSLSVTVALGCMFTPKMYIIIAKPERNVRSAFTTSDVVRMHVGDGKLPCRSNTFLNIFRRKKAGAGNANSNGKSVSWSEPGGGQVPKGQHMWHRLSVHVKTNETACNQTAVIKPLTKSYQGSGKSLTFSDTSTKTLYNVEEEEDAQPIRFSPPGSPSMVVHRRVPSAATTPPLPSHLTAEETPLFLAEPALPKGLPPPLQQQQQPPPQQKSLMDQLQGVVSNFSTAIPDFHAVLAGPGGPGNGLRSLYPPPPPPQHLQMLPLQLSTFGEELVSPPADDDDDSERFKLLQEYVYEHEREGNTEEDELEEEEEDLQAASKLTPDDSPALTPPSPFRDSVASGSSVPSSPVSESVLCTPPNVSYASVILRDYKQSSSTL</sequence>
<comment type="function">
    <text evidence="3 8 9 11 12 13">G-protein coupled receptor for glutamate. Ligand binding causes a conformation change that triggers signaling via guanine nucleotide-binding proteins (G proteins) and modulates the activity of down-stream effectors. Signaling activates a phosphatidylinositol-calcium second messenger system. May participate in the central action of glutamate in the CNS, such as long-term potentiation in the hippocampus and long-term depression in the cerebellum (PubMed:24603153, PubMed:28886343, PubMed:7476890). May function in the light response in the retina (By similarity). Induces GRID1 and GRID2 cation-channel activation via GNAQ-PLC-PKC pathway in dopaminergic neurons and cerebellar Purkinje cell, respectively (PubMed:24357660, PubMed:27276689).</text>
</comment>
<comment type="activity regulation">
    <text evidence="9">Signaling is inhibited by the antagonist LY341495. The LY341495 binding site partially overlaps with the glutamate binding site. Signaling is also inhibited by synthetic allosteric regulators, such as FITM (4-fluoro-N-(4-(6-(isopropylamino)pyrimidin-4-yl)thiazol-2-yl)-N-methylbenzamide) that bind in a pocket between the transmembrane helices.</text>
</comment>
<comment type="subunit">
    <text evidence="2 9">Homodimer; disulfide-linked (PubMed:24603153). The PPXXF motif binds HOMER1, HOMER2 and HOMER3. Interacts with TAMALIN (By similarity). Interacts with RYR1, RYR2, ITPR1, SHANK1 and SHANK3. Interacts with SIAH1 (By similarity).</text>
</comment>
<comment type="interaction">
    <interactant intactId="EBI-8527352">
        <id>Q13255</id>
    </interactant>
    <interactant intactId="EBI-358383">
        <id>P52294</id>
        <label>KPNA1</label>
    </interactant>
    <organismsDiffer>false</organismsDiffer>
    <experiments>2</experiments>
</comment>
<comment type="subcellular location">
    <subcellularLocation>
        <location evidence="9">Cell membrane</location>
        <topology evidence="9">Multi-pass membrane protein</topology>
    </subcellularLocation>
    <subcellularLocation>
        <location evidence="11">Postsynaptic cell membrane</location>
        <topology evidence="4">Multi-pass membrane protein</topology>
    </subcellularLocation>
    <subcellularLocation>
        <location evidence="3">Cell projection</location>
        <location evidence="3">Dendrite</location>
    </subcellularLocation>
    <text evidence="3">Located in dendrioles, small dendrites that makes up a brush structure found as the terminal specialization of a dendrite of a unipolar brush cell.</text>
</comment>
<comment type="alternative products">
    <event type="alternative splicing"/>
    <isoform>
        <id>Q13255-1</id>
        <name>Alpha</name>
        <sequence type="displayed"/>
    </isoform>
    <isoform>
        <id>Q13255-2</id>
        <name>Beta</name>
        <sequence type="described" ref="VSP_002024 VSP_002025"/>
    </isoform>
    <isoform>
        <id>Q13255-3</id>
        <name>3</name>
        <sequence type="described" ref="VSP_055127 VSP_055128"/>
    </isoform>
</comment>
<comment type="tissue specificity">
    <text evidence="14">Detected in brain.</text>
</comment>
<comment type="disease" evidence="7 10">
    <disease id="DI-03542">
        <name>Spinocerebellar ataxia, autosomal recessive, 13</name>
        <acronym>SCAR13</acronym>
        <description>A form of spinocerebellar ataxia, a clinically and genetically heterogeneous group of cerebellar disorders. Patients show progressive incoordination of gait and often poor coordination of hands, speech and eye movements, due to degeneration of the cerebellum with variable involvement of the brainstem and spinal cord. SCAR13 is characterized by delayed psychomotor development beginning in infancy. Affected individuals show mild to profound intellectual disability with poor or absent speech as well as gait and stance ataxia and hyperreflexia.</description>
        <dbReference type="MIM" id="614831"/>
    </disease>
    <text>The disease is caused by variants affecting the gene represented in this entry.</text>
</comment>
<comment type="disease" evidence="12">
    <disease id="DI-05091">
        <name>Spinocerebellar ataxia 44</name>
        <acronym>SCA44</acronym>
        <description>A form of spinocerebellar ataxia, a clinically and genetically heterogeneous group of cerebellar disorders. Patients show progressive incoordination of gait and often poor coordination of hands, speech and eye movements, due to degeneration of the cerebellum with variable involvement of the brainstem and spinal cord. SCA44 is a slowly progressive, autosomal dominant form.</description>
        <dbReference type="MIM" id="617691"/>
    </disease>
    <text>The disease is caused by variants affecting the gene represented in this entry.</text>
</comment>
<comment type="similarity">
    <text evidence="19">Belongs to the G-protein coupled receptor 3 family.</text>
</comment>
<gene>
    <name type="primary">GRM1</name>
    <name type="synonym">GPRC1A</name>
    <name type="synonym">MGLUR1</name>
</gene>
<accession>Q13255</accession>
<accession>B9EG79</accession>
<accession>F8W805</accession>
<accession>Q13256</accession>
<accession>Q14757</accession>
<accession>Q14758</accession>
<accession>Q5VTF7</accession>
<accession>Q5VTF8</accession>
<accession>Q9NU10</accession>
<accession>Q9UGS9</accession>
<accession>Q9UGT0</accession>
<feature type="signal peptide" evidence="4">
    <location>
        <begin position="1"/>
        <end position="18"/>
    </location>
</feature>
<feature type="chain" id="PRO_0000012922" description="Metabotropic glutamate receptor 1">
    <location>
        <begin position="19"/>
        <end position="1194"/>
    </location>
</feature>
<feature type="topological domain" description="Extracellular" evidence="9">
    <location>
        <begin position="19"/>
        <end position="592"/>
    </location>
</feature>
<feature type="transmembrane region" description="Helical; Name=1">
    <location>
        <begin position="593"/>
        <end position="615"/>
    </location>
</feature>
<feature type="topological domain" description="Cytoplasmic" evidence="9">
    <location>
        <begin position="616"/>
        <end position="629"/>
    </location>
</feature>
<feature type="transmembrane region" description="Helical; Name=2">
    <location>
        <begin position="630"/>
        <end position="650"/>
    </location>
</feature>
<feature type="topological domain" description="Extracellular" evidence="9">
    <location>
        <begin position="651"/>
        <end position="658"/>
    </location>
</feature>
<feature type="transmembrane region" description="Helical; Name=3">
    <location>
        <begin position="659"/>
        <end position="680"/>
    </location>
</feature>
<feature type="topological domain" description="Cytoplasmic" evidence="9">
    <location>
        <begin position="681"/>
        <end position="703"/>
    </location>
</feature>
<feature type="transmembrane region" description="Helical; Name=4">
    <location>
        <begin position="704"/>
        <end position="727"/>
    </location>
</feature>
<feature type="topological domain" description="Extracellular" evidence="9">
    <location>
        <begin position="728"/>
        <end position="750"/>
    </location>
</feature>
<feature type="transmembrane region" description="Helical; Name=5">
    <location>
        <begin position="751"/>
        <end position="772"/>
    </location>
</feature>
<feature type="topological domain" description="Cytoplasmic" evidence="9">
    <location>
        <begin position="773"/>
        <end position="785"/>
    </location>
</feature>
<feature type="transmembrane region" description="Helical; Name=6">
    <location>
        <begin position="786"/>
        <end position="807"/>
    </location>
</feature>
<feature type="topological domain" description="Extracellular" evidence="9">
    <location>
        <begin position="808"/>
        <end position="815"/>
    </location>
</feature>
<feature type="transmembrane region" description="Helical; Name=7">
    <location>
        <begin position="816"/>
        <end position="840"/>
    </location>
</feature>
<feature type="topological domain" description="Cytoplasmic" evidence="9">
    <location>
        <begin position="841"/>
        <end position="1194"/>
    </location>
</feature>
<feature type="region of interest" description="Disordered" evidence="5">
    <location>
        <begin position="883"/>
        <end position="905"/>
    </location>
</feature>
<feature type="region of interest" description="Disordered" evidence="5">
    <location>
        <begin position="1007"/>
        <end position="1030"/>
    </location>
</feature>
<feature type="region of interest" description="Disordered" evidence="5">
    <location>
        <begin position="1113"/>
        <end position="1173"/>
    </location>
</feature>
<feature type="compositionally biased region" description="Polar residues" evidence="5">
    <location>
        <begin position="885"/>
        <end position="895"/>
    </location>
</feature>
<feature type="compositionally biased region" description="Pro residues" evidence="5">
    <location>
        <begin position="1012"/>
        <end position="1026"/>
    </location>
</feature>
<feature type="compositionally biased region" description="Acidic residues" evidence="5">
    <location>
        <begin position="1119"/>
        <end position="1131"/>
    </location>
</feature>
<feature type="compositionally biased region" description="Low complexity" evidence="5">
    <location>
        <begin position="1154"/>
        <end position="1170"/>
    </location>
</feature>
<feature type="binding site" evidence="19">
    <location>
        <position position="74"/>
    </location>
    <ligand>
        <name>L-glutamate</name>
        <dbReference type="ChEBI" id="CHEBI:29985"/>
    </ligand>
</feature>
<feature type="binding site" evidence="19">
    <location>
        <position position="165"/>
    </location>
    <ligand>
        <name>L-glutamate</name>
        <dbReference type="ChEBI" id="CHEBI:29985"/>
    </ligand>
</feature>
<feature type="binding site" evidence="19">
    <location>
        <begin position="186"/>
        <end position="188"/>
    </location>
    <ligand>
        <name>L-glutamate</name>
        <dbReference type="ChEBI" id="CHEBI:29985"/>
    </ligand>
</feature>
<feature type="binding site" evidence="1">
    <location>
        <position position="236"/>
    </location>
    <ligand>
        <name>L-glutamate</name>
        <dbReference type="ChEBI" id="CHEBI:29985"/>
    </ligand>
</feature>
<feature type="binding site" evidence="1">
    <location>
        <position position="318"/>
    </location>
    <ligand>
        <name>L-glutamate</name>
        <dbReference type="ChEBI" id="CHEBI:29985"/>
    </ligand>
</feature>
<feature type="binding site" evidence="1">
    <location>
        <position position="409"/>
    </location>
    <ligand>
        <name>L-glutamate</name>
        <dbReference type="ChEBI" id="CHEBI:29985"/>
    </ligand>
</feature>
<feature type="modified residue" description="Phosphoserine" evidence="3">
    <location>
        <position position="853"/>
    </location>
</feature>
<feature type="modified residue" description="Phosphothreonine" evidence="3">
    <location>
        <position position="871"/>
    </location>
</feature>
<feature type="modified residue" description="Phosphoserine" evidence="2">
    <location>
        <position position="894"/>
    </location>
</feature>
<feature type="modified residue" description="Phosphoserine" evidence="3">
    <location>
        <position position="969"/>
    </location>
</feature>
<feature type="modified residue" description="Phosphoserine" evidence="3">
    <location>
        <position position="1091"/>
    </location>
</feature>
<feature type="modified residue" description="Phosphoserine" evidence="3">
    <location>
        <position position="1142"/>
    </location>
</feature>
<feature type="modified residue" description="Phosphothreonine" evidence="2">
    <location>
        <position position="1146"/>
    </location>
</feature>
<feature type="modified residue" description="Phosphoserine" evidence="3">
    <location>
        <position position="1149"/>
    </location>
</feature>
<feature type="glycosylation site" description="N-linked (GlcNAc...) asparagine" evidence="4">
    <location>
        <position position="98"/>
    </location>
</feature>
<feature type="glycosylation site" description="N-linked (GlcNAc...) asparagine" evidence="15">
    <location>
        <position position="223"/>
    </location>
</feature>
<feature type="glycosylation site" description="N-linked (GlcNAc...) asparagine" evidence="4">
    <location>
        <position position="397"/>
    </location>
</feature>
<feature type="glycosylation site" description="N-linked (GlcNAc...) asparagine" evidence="4">
    <location>
        <position position="515"/>
    </location>
</feature>
<feature type="disulfide bond">
    <location>
        <begin position="67"/>
        <end position="109"/>
    </location>
</feature>
<feature type="disulfide bond" description="Interchain">
    <location>
        <position position="140"/>
    </location>
</feature>
<feature type="disulfide bond" evidence="1">
    <location>
        <begin position="289"/>
        <end position="291"/>
    </location>
</feature>
<feature type="disulfide bond">
    <location>
        <begin position="378"/>
        <end position="394"/>
    </location>
</feature>
<feature type="disulfide bond">
    <location>
        <begin position="432"/>
        <end position="439"/>
    </location>
</feature>
<feature type="disulfide bond">
    <location>
        <begin position="657"/>
        <end position="746"/>
    </location>
</feature>
<feature type="splice variant" id="VSP_055127" description="In isoform 3." evidence="16">
    <original>NSNGKSVSWSEPGGGQVPKGQH</original>
    <variation>KWRTGAQGTAYVAPPLCAREDQ</variation>
    <location>
        <begin position="887"/>
        <end position="908"/>
    </location>
</feature>
<feature type="splice variant" id="VSP_002024" description="In isoform Beta." evidence="17 18">
    <original>NSNGKSVSWSEPGGGQVPKG</original>
    <variation>KKRQPEFSPTSQCPSAHVQL</variation>
    <location>
        <begin position="887"/>
        <end position="906"/>
    </location>
</feature>
<feature type="splice variant" id="VSP_002025" description="In isoform Beta." evidence="17 18">
    <location>
        <begin position="907"/>
        <end position="1194"/>
    </location>
</feature>
<feature type="splice variant" id="VSP_055128" description="In isoform 3." evidence="16">
    <location>
        <begin position="909"/>
        <end position="1194"/>
    </location>
</feature>
<feature type="sequence variant" id="VAR_028184" description="In dbSNP:rs12190109.">
    <original>S</original>
    <variation>Y</variation>
    <location>
        <position position="34"/>
    </location>
</feature>
<feature type="sequence variant" id="VAR_080186" description="In SCA44; enhances G-protein coupled glutamate receptor signaling pathway; dbSNP:rs1554274719." evidence="12">
    <original>Y</original>
    <variation>C</variation>
    <location>
        <position position="262"/>
    </location>
</feature>
<feature type="sequence variant" id="VAR_028185" description="In dbSNP:rs7760248.">
    <original>R</original>
    <variation>K</variation>
    <location>
        <position position="285"/>
    </location>
</feature>
<feature type="sequence variant" id="VAR_081782" description="In SCAR13." evidence="10">
    <original>L</original>
    <variation>F</variation>
    <location>
        <position position="454"/>
    </location>
</feature>
<feature type="sequence variant" id="VAR_055875" description="In dbSNP:rs1047005." evidence="13">
    <original>S</original>
    <variation>P</variation>
    <location>
        <position position="593"/>
    </location>
</feature>
<feature type="sequence variant" id="VAR_036194" description="In a colorectal cancer sample; somatic mutation; dbSNP:rs1450433570." evidence="6">
    <original>R</original>
    <variation>W</variation>
    <location>
        <position position="696"/>
    </location>
</feature>
<feature type="sequence variant" id="VAR_028186" description="In dbSNP:rs3025919.">
    <original>E</original>
    <variation>D</variation>
    <location>
        <position position="741"/>
    </location>
</feature>
<feature type="sequence variant" id="VAR_080187" description="In SCA44; enhances G-protein coupled glutamate receptor signaling pathway; dbSNP:rs1554308513." evidence="12">
    <original>Y</original>
    <variation>C</variation>
    <location>
        <position position="792"/>
    </location>
</feature>
<feature type="sequence variant" id="VAR_028187" description="In dbSNP:rs362936.">
    <original>G</original>
    <variation>E</variation>
    <location>
        <position position="884"/>
    </location>
</feature>
<feature type="sequence variant" id="VAR_024482" description="In dbSNP:rs2941.">
    <original>V</original>
    <variation>I</variation>
    <location>
        <position position="929"/>
    </location>
</feature>
<feature type="sequence variant" id="VAR_028188" description="In dbSNP:rs6923492." evidence="13 14">
    <original>S</original>
    <variation>P</variation>
    <location>
        <position position="993"/>
    </location>
</feature>
<feature type="strand" evidence="20">
    <location>
        <begin position="39"/>
        <end position="41"/>
    </location>
</feature>
<feature type="strand" evidence="20">
    <location>
        <begin position="44"/>
        <end position="51"/>
    </location>
</feature>
<feature type="helix" evidence="20">
    <location>
        <begin position="59"/>
        <end position="61"/>
    </location>
</feature>
<feature type="turn" evidence="20">
    <location>
        <begin position="62"/>
        <end position="65"/>
    </location>
</feature>
<feature type="turn" evidence="20">
    <location>
        <begin position="72"/>
        <end position="75"/>
    </location>
</feature>
<feature type="helix" evidence="20">
    <location>
        <begin position="76"/>
        <end position="90"/>
    </location>
</feature>
<feature type="strand" evidence="20">
    <location>
        <begin position="93"/>
        <end position="96"/>
    </location>
</feature>
<feature type="strand" evidence="20">
    <location>
        <begin position="101"/>
        <end position="107"/>
    </location>
</feature>
<feature type="helix" evidence="20">
    <location>
        <begin position="112"/>
        <end position="123"/>
    </location>
</feature>
<feature type="strand" evidence="20">
    <location>
        <begin position="156"/>
        <end position="160"/>
    </location>
</feature>
<feature type="helix" evidence="20">
    <location>
        <begin position="165"/>
        <end position="175"/>
    </location>
</feature>
<feature type="helix" evidence="20">
    <location>
        <begin position="176"/>
        <end position="178"/>
    </location>
</feature>
<feature type="strand" evidence="20">
    <location>
        <begin position="182"/>
        <end position="186"/>
    </location>
</feature>
<feature type="helix" evidence="20">
    <location>
        <begin position="190"/>
        <end position="193"/>
    </location>
</feature>
<feature type="turn" evidence="20">
    <location>
        <begin position="195"/>
        <end position="197"/>
    </location>
</feature>
<feature type="strand" evidence="20">
    <location>
        <begin position="201"/>
        <end position="205"/>
    </location>
</feature>
<feature type="helix" evidence="20">
    <location>
        <begin position="209"/>
        <end position="221"/>
    </location>
</feature>
<feature type="strand" evidence="20">
    <location>
        <begin position="226"/>
        <end position="234"/>
    </location>
</feature>
<feature type="helix" evidence="20">
    <location>
        <begin position="235"/>
        <end position="250"/>
    </location>
</feature>
<feature type="strand" evidence="20">
    <location>
        <begin position="254"/>
        <end position="261"/>
    </location>
</feature>
<feature type="helix" evidence="20">
    <location>
        <begin position="267"/>
        <end position="278"/>
    </location>
</feature>
<feature type="turn" evidence="20">
    <location>
        <begin position="279"/>
        <end position="284"/>
    </location>
</feature>
<feature type="strand" evidence="20">
    <location>
        <begin position="286"/>
        <end position="290"/>
    </location>
</feature>
<feature type="helix" evidence="20">
    <location>
        <begin position="293"/>
        <end position="306"/>
    </location>
</feature>
<feature type="strand" evidence="20">
    <location>
        <begin position="313"/>
        <end position="316"/>
    </location>
</feature>
<feature type="turn" evidence="20">
    <location>
        <begin position="318"/>
        <end position="322"/>
    </location>
</feature>
<feature type="helix" evidence="20">
    <location>
        <begin position="324"/>
        <end position="327"/>
    </location>
</feature>
<feature type="helix" evidence="20">
    <location>
        <begin position="331"/>
        <end position="334"/>
    </location>
</feature>
<feature type="strand" evidence="20">
    <location>
        <begin position="338"/>
        <end position="342"/>
    </location>
</feature>
<feature type="helix" evidence="20">
    <location>
        <begin position="348"/>
        <end position="354"/>
    </location>
</feature>
<feature type="turn" evidence="20">
    <location>
        <begin position="359"/>
        <end position="361"/>
    </location>
</feature>
<feature type="helix" evidence="20">
    <location>
        <begin position="368"/>
        <end position="375"/>
    </location>
</feature>
<feature type="strand" evidence="20">
    <location>
        <begin position="391"/>
        <end position="393"/>
    </location>
</feature>
<feature type="turn" evidence="20">
    <location>
        <begin position="400"/>
        <end position="403"/>
    </location>
</feature>
<feature type="helix" evidence="20">
    <location>
        <begin position="410"/>
        <end position="431"/>
    </location>
</feature>
<feature type="helix" evidence="20">
    <location>
        <begin position="440"/>
        <end position="442"/>
    </location>
</feature>
<feature type="helix" evidence="20">
    <location>
        <begin position="447"/>
        <end position="455"/>
    </location>
</feature>
<feature type="strand" evidence="20">
    <location>
        <begin position="458"/>
        <end position="460"/>
    </location>
</feature>
<feature type="strand" evidence="20">
    <location>
        <begin position="466"/>
        <end position="468"/>
    </location>
</feature>
<feature type="strand" evidence="20">
    <location>
        <begin position="478"/>
        <end position="486"/>
    </location>
</feature>
<feature type="strand" evidence="20">
    <location>
        <begin position="492"/>
        <end position="501"/>
    </location>
</feature>
<feature type="strand" evidence="20">
    <location>
        <begin position="504"/>
        <end position="507"/>
    </location>
</feature>
<feature type="turn" evidence="20">
    <location>
        <begin position="509"/>
        <end position="511"/>
    </location>
</feature>
<feature type="helix" evidence="21">
    <location>
        <begin position="591"/>
        <end position="616"/>
    </location>
</feature>
<feature type="strand" evidence="21">
    <location>
        <begin position="618"/>
        <end position="620"/>
    </location>
</feature>
<feature type="helix" evidence="21">
    <location>
        <begin position="621"/>
        <end position="624"/>
    </location>
</feature>
<feature type="helix" evidence="21">
    <location>
        <begin position="628"/>
        <end position="649"/>
    </location>
</feature>
<feature type="helix" evidence="21">
    <location>
        <begin position="654"/>
        <end position="685"/>
    </location>
</feature>
<feature type="helix" evidence="21">
    <location>
        <begin position="703"/>
        <end position="727"/>
    </location>
</feature>
<feature type="strand" evidence="21">
    <location>
        <begin position="732"/>
        <end position="735"/>
    </location>
</feature>
<feature type="strand" evidence="21">
    <location>
        <begin position="738"/>
        <end position="740"/>
    </location>
</feature>
<feature type="strand" evidence="21">
    <location>
        <begin position="742"/>
        <end position="746"/>
    </location>
</feature>
<feature type="helix" evidence="21">
    <location>
        <begin position="750"/>
        <end position="773"/>
    </location>
</feature>
<feature type="turn" evidence="21">
    <location>
        <begin position="774"/>
        <end position="776"/>
    </location>
</feature>
<feature type="helix" evidence="21">
    <location>
        <begin position="779"/>
        <end position="807"/>
    </location>
</feature>
<feature type="helix" evidence="21">
    <location>
        <begin position="811"/>
        <end position="839"/>
    </location>
</feature>
<feature type="sequence conflict" description="In Ref. 1; AAA87844." evidence="19" ref="1">
    <original>T</original>
    <variation>S</variation>
    <location sequence="Q13255-2">
        <position position="896"/>
    </location>
</feature>
<feature type="sequence conflict" description="In Ref. 1; AAA87844." evidence="19" ref="1">
    <original>V</original>
    <variation>A</variation>
    <location sequence="Q13255-2">
        <position position="904"/>
    </location>
</feature>
<dbReference type="EMBL" id="U31215">
    <property type="protein sequence ID" value="AAA87843.1"/>
    <property type="molecule type" value="mRNA"/>
</dbReference>
<dbReference type="EMBL" id="U31216">
    <property type="protein sequence ID" value="AAA87844.1"/>
    <property type="molecule type" value="mRNA"/>
</dbReference>
<dbReference type="EMBL" id="L76627">
    <property type="protein sequence ID" value="AAB05337.1"/>
    <property type="molecule type" value="mRNA"/>
</dbReference>
<dbReference type="EMBL" id="L76631">
    <property type="protein sequence ID" value="AAB05338.1"/>
    <property type="molecule type" value="mRNA"/>
</dbReference>
<dbReference type="EMBL" id="AL031769">
    <property type="status" value="NOT_ANNOTATED_CDS"/>
    <property type="molecule type" value="Genomic_DNA"/>
</dbReference>
<dbReference type="EMBL" id="AL592423">
    <property type="status" value="NOT_ANNOTATED_CDS"/>
    <property type="molecule type" value="Genomic_DNA"/>
</dbReference>
<dbReference type="EMBL" id="AL096867">
    <property type="status" value="NOT_ANNOTATED_CDS"/>
    <property type="molecule type" value="Genomic_DNA"/>
</dbReference>
<dbReference type="EMBL" id="AL035698">
    <property type="status" value="NOT_ANNOTATED_CDS"/>
    <property type="molecule type" value="Genomic_DNA"/>
</dbReference>
<dbReference type="EMBL" id="BC136280">
    <property type="protein sequence ID" value="AAI36281.1"/>
    <property type="molecule type" value="mRNA"/>
</dbReference>
<dbReference type="EMBL" id="BC143779">
    <property type="status" value="NOT_ANNOTATED_CDS"/>
    <property type="molecule type" value="mRNA"/>
</dbReference>
<dbReference type="CCDS" id="CCDS47497.1">
    <molecule id="Q13255-2"/>
</dbReference>
<dbReference type="CCDS" id="CCDS5209.1">
    <molecule id="Q13255-1"/>
</dbReference>
<dbReference type="CCDS" id="CCDS64548.1">
    <molecule id="Q13255-3"/>
</dbReference>
<dbReference type="RefSeq" id="NP_001264993.1">
    <molecule id="Q13255-1"/>
    <property type="nucleotide sequence ID" value="NM_001278064.2"/>
</dbReference>
<dbReference type="RefSeq" id="NP_001264994.1">
    <molecule id="Q13255-2"/>
    <property type="nucleotide sequence ID" value="NM_001278065.2"/>
</dbReference>
<dbReference type="RefSeq" id="NP_001264995.1">
    <molecule id="Q13255-2"/>
    <property type="nucleotide sequence ID" value="NM_001278066.1"/>
</dbReference>
<dbReference type="RefSeq" id="NP_001264996.1">
    <molecule id="Q13255-3"/>
    <property type="nucleotide sequence ID" value="NM_001278067.1"/>
</dbReference>
<dbReference type="RefSeq" id="XP_011534084.1">
    <molecule id="Q13255-1"/>
    <property type="nucleotide sequence ID" value="XM_011535782.2"/>
</dbReference>
<dbReference type="RefSeq" id="XP_016866272.1">
    <molecule id="Q13255-1"/>
    <property type="nucleotide sequence ID" value="XM_017010783.2"/>
</dbReference>
<dbReference type="RefSeq" id="XP_016866273.1">
    <molecule id="Q13255-1"/>
    <property type="nucleotide sequence ID" value="XM_017010784.2"/>
</dbReference>
<dbReference type="RefSeq" id="XP_016866274.1">
    <property type="nucleotide sequence ID" value="XM_017010785.1"/>
</dbReference>
<dbReference type="RefSeq" id="XP_016866275.1">
    <property type="nucleotide sequence ID" value="XM_017010786.1"/>
</dbReference>
<dbReference type="RefSeq" id="XP_016866276.1">
    <property type="nucleotide sequence ID" value="XM_017010787.1"/>
</dbReference>
<dbReference type="PDB" id="3KS9">
    <property type="method" value="X-ray"/>
    <property type="resolution" value="1.90 A"/>
    <property type="chains" value="A/B=28-518"/>
</dbReference>
<dbReference type="PDB" id="4OR2">
    <property type="method" value="X-ray"/>
    <property type="resolution" value="2.80 A"/>
    <property type="chains" value="A/B=581-860"/>
</dbReference>
<dbReference type="PDB" id="7DGD">
    <property type="method" value="EM"/>
    <property type="resolution" value="3.96 A"/>
    <property type="chains" value="A/B=31-863"/>
</dbReference>
<dbReference type="PDB" id="7DGE">
    <property type="method" value="EM"/>
    <property type="resolution" value="3.65 A"/>
    <property type="chains" value="A/B=31-863"/>
</dbReference>
<dbReference type="PDBsum" id="3KS9"/>
<dbReference type="PDBsum" id="4OR2"/>
<dbReference type="PDBsum" id="7DGD"/>
<dbReference type="PDBsum" id="7DGE"/>
<dbReference type="EMDB" id="EMD-30671"/>
<dbReference type="EMDB" id="EMD-30672"/>
<dbReference type="SMR" id="Q13255"/>
<dbReference type="BioGRID" id="109168">
    <property type="interactions" value="48"/>
</dbReference>
<dbReference type="CORUM" id="Q13255"/>
<dbReference type="DIP" id="DIP-57522N"/>
<dbReference type="ELM" id="Q13255"/>
<dbReference type="FunCoup" id="Q13255">
    <property type="interactions" value="1082"/>
</dbReference>
<dbReference type="IntAct" id="Q13255">
    <property type="interactions" value="5"/>
</dbReference>
<dbReference type="MINT" id="Q13255"/>
<dbReference type="STRING" id="9606.ENSP00000282753"/>
<dbReference type="BindingDB" id="Q13255"/>
<dbReference type="ChEMBL" id="CHEMBL3772"/>
<dbReference type="DrugBank" id="DB04256">
    <property type="generic name" value="(S)-alpha-methyl-4-carboxyphenylglycine"/>
</dbReference>
<dbReference type="DrugBank" id="DB16073">
    <property type="generic name" value="AZD8529"/>
</dbReference>
<dbReference type="DrugBank" id="DB00142">
    <property type="generic name" value="Glutamic acid"/>
</dbReference>
<dbReference type="DrugBank" id="DB02999">
    <property type="generic name" value="Quisqualic acid"/>
</dbReference>
<dbReference type="DrugCentral" id="Q13255"/>
<dbReference type="GuidetoPHARMACOLOGY" id="289"/>
<dbReference type="TCDB" id="9.A.14.7.1">
    <property type="family name" value="the g-protein-coupled receptor (gpcr) family"/>
</dbReference>
<dbReference type="GlyCosmos" id="Q13255">
    <property type="glycosylation" value="4 sites, No reported glycans"/>
</dbReference>
<dbReference type="GlyGen" id="Q13255">
    <property type="glycosylation" value="9 sites"/>
</dbReference>
<dbReference type="iPTMnet" id="Q13255"/>
<dbReference type="PhosphoSitePlus" id="Q13255"/>
<dbReference type="BioMuta" id="GRM1"/>
<dbReference type="DMDM" id="311033443"/>
<dbReference type="jPOST" id="Q13255"/>
<dbReference type="MassIVE" id="Q13255"/>
<dbReference type="PaxDb" id="9606-ENSP00000354896"/>
<dbReference type="PeptideAtlas" id="Q13255"/>
<dbReference type="ProteomicsDB" id="30048"/>
<dbReference type="ProteomicsDB" id="59254">
    <molecule id="Q13255-1"/>
</dbReference>
<dbReference type="ProteomicsDB" id="59255">
    <molecule id="Q13255-2"/>
</dbReference>
<dbReference type="Antibodypedia" id="2943">
    <property type="antibodies" value="677 antibodies from 43 providers"/>
</dbReference>
<dbReference type="DNASU" id="2911"/>
<dbReference type="Ensembl" id="ENST00000282753.6">
    <molecule id="Q13255-1"/>
    <property type="protein sequence ID" value="ENSP00000282753.1"/>
    <property type="gene ID" value="ENSG00000152822.15"/>
</dbReference>
<dbReference type="Ensembl" id="ENST00000355289.8">
    <molecule id="Q13255-3"/>
    <property type="protein sequence ID" value="ENSP00000347437.4"/>
    <property type="gene ID" value="ENSG00000152822.15"/>
</dbReference>
<dbReference type="Ensembl" id="ENST00000361719.6">
    <molecule id="Q13255-1"/>
    <property type="protein sequence ID" value="ENSP00000354896.2"/>
    <property type="gene ID" value="ENSG00000152822.15"/>
</dbReference>
<dbReference type="Ensembl" id="ENST00000492807.6">
    <molecule id="Q13255-2"/>
    <property type="protein sequence ID" value="ENSP00000424095.1"/>
    <property type="gene ID" value="ENSG00000152822.15"/>
</dbReference>
<dbReference type="Ensembl" id="ENST00000507907.1">
    <molecule id="Q13255-2"/>
    <property type="protein sequence ID" value="ENSP00000425599.1"/>
    <property type="gene ID" value="ENSG00000152822.15"/>
</dbReference>
<dbReference type="Ensembl" id="ENST00000706833.1">
    <molecule id="Q13255-1"/>
    <property type="protein sequence ID" value="ENSP00000516579.1"/>
    <property type="gene ID" value="ENSG00000152822.15"/>
</dbReference>
<dbReference type="Ensembl" id="ENST00000706834.1">
    <molecule id="Q13255-2"/>
    <property type="protein sequence ID" value="ENSP00000516580.1"/>
    <property type="gene ID" value="ENSG00000152822.15"/>
</dbReference>
<dbReference type="Ensembl" id="ENST00000706835.1">
    <molecule id="Q13255-1"/>
    <property type="protein sequence ID" value="ENSP00000516581.1"/>
    <property type="gene ID" value="ENSG00000152822.15"/>
</dbReference>
<dbReference type="Ensembl" id="ENST00000706836.1">
    <molecule id="Q13255-2"/>
    <property type="protein sequence ID" value="ENSP00000516582.1"/>
    <property type="gene ID" value="ENSG00000152822.15"/>
</dbReference>
<dbReference type="GeneID" id="2911"/>
<dbReference type="KEGG" id="hsa:2911"/>
<dbReference type="MANE-Select" id="ENST00000282753.6">
    <property type="protein sequence ID" value="ENSP00000282753.1"/>
    <property type="RefSeq nucleotide sequence ID" value="NM_001278064.2"/>
    <property type="RefSeq protein sequence ID" value="NP_001264993.1"/>
</dbReference>
<dbReference type="UCSC" id="uc003qll.4">
    <molecule id="Q13255-1"/>
    <property type="organism name" value="human"/>
</dbReference>
<dbReference type="AGR" id="HGNC:4593"/>
<dbReference type="CTD" id="2911"/>
<dbReference type="DisGeNET" id="2911"/>
<dbReference type="GeneCards" id="GRM1"/>
<dbReference type="HGNC" id="HGNC:4593">
    <property type="gene designation" value="GRM1"/>
</dbReference>
<dbReference type="HPA" id="ENSG00000152822">
    <property type="expression patterns" value="Group enriched (brain, retina)"/>
</dbReference>
<dbReference type="MalaCards" id="GRM1"/>
<dbReference type="MIM" id="604473">
    <property type="type" value="gene"/>
</dbReference>
<dbReference type="MIM" id="614831">
    <property type="type" value="phenotype"/>
</dbReference>
<dbReference type="MIM" id="617691">
    <property type="type" value="phenotype"/>
</dbReference>
<dbReference type="neXtProt" id="NX_Q13255"/>
<dbReference type="OpenTargets" id="ENSG00000152822"/>
<dbReference type="Orphanet" id="324262">
    <property type="disease" value="Autosomal recessive congenital cerebellar ataxia due to MGLUR1 deficiency"/>
</dbReference>
<dbReference type="Orphanet" id="404507">
    <property type="disease" value="Chondromyxoid fibroma"/>
</dbReference>
<dbReference type="Orphanet" id="631095">
    <property type="disease" value="Spinocerebellar ataxia type 44"/>
</dbReference>
<dbReference type="PharmGKB" id="PA28990"/>
<dbReference type="VEuPathDB" id="HostDB:ENSG00000152822"/>
<dbReference type="eggNOG" id="KOG1056">
    <property type="taxonomic scope" value="Eukaryota"/>
</dbReference>
<dbReference type="GeneTree" id="ENSGT01030000234595"/>
<dbReference type="HOGENOM" id="CLU_005389_0_1_1"/>
<dbReference type="InParanoid" id="Q13255"/>
<dbReference type="OMA" id="NEMACNQ"/>
<dbReference type="OrthoDB" id="425344at2759"/>
<dbReference type="PAN-GO" id="Q13255">
    <property type="GO annotations" value="7 GO annotations based on evolutionary models"/>
</dbReference>
<dbReference type="PhylomeDB" id="Q13255"/>
<dbReference type="TreeFam" id="TF313240"/>
<dbReference type="PathwayCommons" id="Q13255"/>
<dbReference type="Reactome" id="R-HSA-416476">
    <property type="pathway name" value="G alpha (q) signalling events"/>
</dbReference>
<dbReference type="Reactome" id="R-HSA-420499">
    <property type="pathway name" value="Class C/3 (Metabotropic glutamate/pheromone receptors)"/>
</dbReference>
<dbReference type="Reactome" id="R-HSA-6794361">
    <property type="pathway name" value="Neurexins and neuroligins"/>
</dbReference>
<dbReference type="Reactome" id="R-HSA-9717207">
    <property type="pathway name" value="Sensory perception of sweet, bitter, and umami (glutamate) taste"/>
</dbReference>
<dbReference type="SignaLink" id="Q13255"/>
<dbReference type="SIGNOR" id="Q13255"/>
<dbReference type="BioGRID-ORCS" id="2911">
    <property type="hits" value="10 hits in 1144 CRISPR screens"/>
</dbReference>
<dbReference type="ChiTaRS" id="GRM1">
    <property type="organism name" value="human"/>
</dbReference>
<dbReference type="EvolutionaryTrace" id="Q13255"/>
<dbReference type="GeneWiki" id="Metabotropic_glutamate_receptor_1"/>
<dbReference type="GenomeRNAi" id="2911"/>
<dbReference type="Pharos" id="Q13255">
    <property type="development level" value="Tchem"/>
</dbReference>
<dbReference type="PRO" id="PR:Q13255"/>
<dbReference type="Proteomes" id="UP000005640">
    <property type="component" value="Chromosome 6"/>
</dbReference>
<dbReference type="RNAct" id="Q13255">
    <property type="molecule type" value="protein"/>
</dbReference>
<dbReference type="Bgee" id="ENSG00000152822">
    <property type="expression patterns" value="Expressed in lateral nuclear group of thalamus and 74 other cell types or tissues"/>
</dbReference>
<dbReference type="GO" id="GO:0044293">
    <property type="term" value="C:dendriole"/>
    <property type="evidence" value="ECO:0000250"/>
    <property type="project" value="UniProtKB"/>
</dbReference>
<dbReference type="GO" id="GO:0038037">
    <property type="term" value="C:G protein-coupled receptor dimeric complex"/>
    <property type="evidence" value="ECO:0000314"/>
    <property type="project" value="UniProtKB"/>
</dbReference>
<dbReference type="GO" id="GO:0038038">
    <property type="term" value="C:G protein-coupled receptor homodimeric complex"/>
    <property type="evidence" value="ECO:0000353"/>
    <property type="project" value="FlyBase"/>
</dbReference>
<dbReference type="GO" id="GO:0098978">
    <property type="term" value="C:glutamatergic synapse"/>
    <property type="evidence" value="ECO:0007669"/>
    <property type="project" value="Ensembl"/>
</dbReference>
<dbReference type="GO" id="GO:0005634">
    <property type="term" value="C:nucleus"/>
    <property type="evidence" value="ECO:0007669"/>
    <property type="project" value="Ensembl"/>
</dbReference>
<dbReference type="GO" id="GO:0005886">
    <property type="term" value="C:plasma membrane"/>
    <property type="evidence" value="ECO:0000315"/>
    <property type="project" value="UniProtKB"/>
</dbReference>
<dbReference type="GO" id="GO:0098839">
    <property type="term" value="C:postsynaptic density membrane"/>
    <property type="evidence" value="ECO:0000318"/>
    <property type="project" value="GO_Central"/>
</dbReference>
<dbReference type="GO" id="GO:0098685">
    <property type="term" value="C:Schaffer collateral - CA1 synapse"/>
    <property type="evidence" value="ECO:0007669"/>
    <property type="project" value="Ensembl"/>
</dbReference>
<dbReference type="GO" id="GO:0001640">
    <property type="term" value="F:adenylate cyclase inhibiting G protein-coupled glutamate receptor activity"/>
    <property type="evidence" value="ECO:0000318"/>
    <property type="project" value="GO_Central"/>
</dbReference>
<dbReference type="GO" id="GO:0098872">
    <property type="term" value="F:G protein-coupled neurotransmitter receptor activity involved in regulation of postsynaptic cytosolic calcium ion concentration"/>
    <property type="evidence" value="ECO:0007669"/>
    <property type="project" value="Ensembl"/>
</dbReference>
<dbReference type="GO" id="GO:0004930">
    <property type="term" value="F:G protein-coupled receptor activity"/>
    <property type="evidence" value="ECO:0000304"/>
    <property type="project" value="UniProtKB"/>
</dbReference>
<dbReference type="GO" id="GO:0099530">
    <property type="term" value="F:G protein-coupled receptor activity involved in regulation of postsynaptic membrane potential"/>
    <property type="evidence" value="ECO:0000314"/>
    <property type="project" value="UniProt"/>
</dbReference>
<dbReference type="GO" id="GO:0008066">
    <property type="term" value="F:glutamate receptor activity"/>
    <property type="evidence" value="ECO:0000314"/>
    <property type="project" value="UniProtKB"/>
</dbReference>
<dbReference type="GO" id="GO:0099583">
    <property type="term" value="F:neurotransmitter receptor activity involved in regulation of postsynaptic cytosolic calcium ion concentration"/>
    <property type="evidence" value="ECO:0000318"/>
    <property type="project" value="GO_Central"/>
</dbReference>
<dbReference type="GO" id="GO:0071257">
    <property type="term" value="P:cellular response to electrical stimulus"/>
    <property type="evidence" value="ECO:0007669"/>
    <property type="project" value="Ensembl"/>
</dbReference>
<dbReference type="GO" id="GO:0007268">
    <property type="term" value="P:chemical synaptic transmission"/>
    <property type="evidence" value="ECO:0000304"/>
    <property type="project" value="ProtInc"/>
</dbReference>
<dbReference type="GO" id="GO:0007216">
    <property type="term" value="P:G protein-coupled glutamate receptor signaling pathway"/>
    <property type="evidence" value="ECO:0000318"/>
    <property type="project" value="GO_Central"/>
</dbReference>
<dbReference type="GO" id="GO:0007186">
    <property type="term" value="P:G protein-coupled receptor signaling pathway"/>
    <property type="evidence" value="ECO:0000315"/>
    <property type="project" value="UniProtKB"/>
</dbReference>
<dbReference type="GO" id="GO:0098712">
    <property type="term" value="P:L-glutamate import across plasma membrane"/>
    <property type="evidence" value="ECO:0007669"/>
    <property type="project" value="Ensembl"/>
</dbReference>
<dbReference type="GO" id="GO:0007626">
    <property type="term" value="P:locomotory behavior"/>
    <property type="evidence" value="ECO:0007669"/>
    <property type="project" value="Ensembl"/>
</dbReference>
<dbReference type="GO" id="GO:0007206">
    <property type="term" value="P:phospholipase C-activating G protein-coupled glutamate receptor signaling pathway"/>
    <property type="evidence" value="ECO:0000315"/>
    <property type="project" value="UniProtKB"/>
</dbReference>
<dbReference type="GO" id="GO:0007200">
    <property type="term" value="P:phospholipase C-activating G protein-coupled receptor signaling pathway"/>
    <property type="evidence" value="ECO:0000314"/>
    <property type="project" value="UniProt"/>
</dbReference>
<dbReference type="GO" id="GO:0043410">
    <property type="term" value="P:positive regulation of MAPK cascade"/>
    <property type="evidence" value="ECO:0007669"/>
    <property type="project" value="Ensembl"/>
</dbReference>
<dbReference type="GO" id="GO:0051930">
    <property type="term" value="P:regulation of sensory perception of pain"/>
    <property type="evidence" value="ECO:0007669"/>
    <property type="project" value="Ensembl"/>
</dbReference>
<dbReference type="GO" id="GO:0051966">
    <property type="term" value="P:regulation of synaptic transmission, glutamatergic"/>
    <property type="evidence" value="ECO:0000318"/>
    <property type="project" value="GO_Central"/>
</dbReference>
<dbReference type="GO" id="GO:0019233">
    <property type="term" value="P:sensory perception of pain"/>
    <property type="evidence" value="ECO:0007669"/>
    <property type="project" value="Ensembl"/>
</dbReference>
<dbReference type="GO" id="GO:0099538">
    <property type="term" value="P:synaptic signaling via neuropeptide"/>
    <property type="evidence" value="ECO:0000314"/>
    <property type="project" value="UniProt"/>
</dbReference>
<dbReference type="CDD" id="cd15449">
    <property type="entry name" value="7tmC_mGluR1"/>
    <property type="match status" value="1"/>
</dbReference>
<dbReference type="CDD" id="cd06374">
    <property type="entry name" value="PBP1_mGluR_groupI"/>
    <property type="match status" value="1"/>
</dbReference>
<dbReference type="FunFam" id="3.40.50.2300:FF:000219">
    <property type="entry name" value="Glutamate metabotropic receptor 5"/>
    <property type="match status" value="2"/>
</dbReference>
<dbReference type="FunFam" id="3.40.50.2300:FF:000337">
    <property type="entry name" value="Metabotropic glutamate receptor 1"/>
    <property type="match status" value="1"/>
</dbReference>
<dbReference type="FunFam" id="2.10.50.30:FF:000001">
    <property type="entry name" value="metabotropic glutamate receptor 1"/>
    <property type="match status" value="1"/>
</dbReference>
<dbReference type="Gene3D" id="3.40.50.2300">
    <property type="match status" value="2"/>
</dbReference>
<dbReference type="Gene3D" id="2.10.50.30">
    <property type="entry name" value="GPCR, family 3, nine cysteines domain"/>
    <property type="match status" value="1"/>
</dbReference>
<dbReference type="InterPro" id="IPR001828">
    <property type="entry name" value="ANF_lig-bd_rcpt"/>
</dbReference>
<dbReference type="InterPro" id="IPR000337">
    <property type="entry name" value="GPCR_3"/>
</dbReference>
<dbReference type="InterPro" id="IPR011500">
    <property type="entry name" value="GPCR_3_9-Cys_dom"/>
</dbReference>
<dbReference type="InterPro" id="IPR038550">
    <property type="entry name" value="GPCR_3_9-Cys_sf"/>
</dbReference>
<dbReference type="InterPro" id="IPR017978">
    <property type="entry name" value="GPCR_3_C"/>
</dbReference>
<dbReference type="InterPro" id="IPR017979">
    <property type="entry name" value="GPCR_3_CS"/>
</dbReference>
<dbReference type="InterPro" id="IPR001256">
    <property type="entry name" value="GPCR_3_mGluR1"/>
</dbReference>
<dbReference type="InterPro" id="IPR000162">
    <property type="entry name" value="GPCR_3_mtglu_rcpt"/>
</dbReference>
<dbReference type="InterPro" id="IPR019588">
    <property type="entry name" value="Metabotropic_Glu_rcpt_Homer-bd"/>
</dbReference>
<dbReference type="InterPro" id="IPR050726">
    <property type="entry name" value="mGluR"/>
</dbReference>
<dbReference type="InterPro" id="IPR028082">
    <property type="entry name" value="Peripla_BP_I"/>
</dbReference>
<dbReference type="PANTHER" id="PTHR24060">
    <property type="entry name" value="METABOTROPIC GLUTAMATE RECEPTOR"/>
    <property type="match status" value="1"/>
</dbReference>
<dbReference type="Pfam" id="PF00003">
    <property type="entry name" value="7tm_3"/>
    <property type="match status" value="1"/>
</dbReference>
<dbReference type="Pfam" id="PF01094">
    <property type="entry name" value="ANF_receptor"/>
    <property type="match status" value="1"/>
</dbReference>
<dbReference type="Pfam" id="PF10606">
    <property type="entry name" value="GluR_Homer-bdg"/>
    <property type="match status" value="1"/>
</dbReference>
<dbReference type="Pfam" id="PF07562">
    <property type="entry name" value="NCD3G"/>
    <property type="match status" value="1"/>
</dbReference>
<dbReference type="PRINTS" id="PR00248">
    <property type="entry name" value="GPCRMGR"/>
</dbReference>
<dbReference type="PRINTS" id="PR01051">
    <property type="entry name" value="MTABOTROPC1R"/>
</dbReference>
<dbReference type="PRINTS" id="PR00593">
    <property type="entry name" value="MTABOTROPICR"/>
</dbReference>
<dbReference type="SMART" id="SM01229">
    <property type="entry name" value="GluR_Homer-bdg"/>
    <property type="match status" value="1"/>
</dbReference>
<dbReference type="SUPFAM" id="SSF53822">
    <property type="entry name" value="Periplasmic binding protein-like I"/>
    <property type="match status" value="1"/>
</dbReference>
<dbReference type="PROSITE" id="PS00979">
    <property type="entry name" value="G_PROTEIN_RECEP_F3_1"/>
    <property type="match status" value="1"/>
</dbReference>
<dbReference type="PROSITE" id="PS00980">
    <property type="entry name" value="G_PROTEIN_RECEP_F3_2"/>
    <property type="match status" value="1"/>
</dbReference>
<dbReference type="PROSITE" id="PS00981">
    <property type="entry name" value="G_PROTEIN_RECEP_F3_3"/>
    <property type="match status" value="1"/>
</dbReference>
<dbReference type="PROSITE" id="PS50259">
    <property type="entry name" value="G_PROTEIN_RECEP_F3_4"/>
    <property type="match status" value="1"/>
</dbReference>